<name>RNC_CLOB8</name>
<proteinExistence type="inferred from homology"/>
<feature type="chain" id="PRO_1000075739" description="Ribonuclease 3">
    <location>
        <begin position="1"/>
        <end position="232"/>
    </location>
</feature>
<feature type="domain" description="RNase III" evidence="1">
    <location>
        <begin position="6"/>
        <end position="133"/>
    </location>
</feature>
<feature type="domain" description="DRBM" evidence="1">
    <location>
        <begin position="160"/>
        <end position="229"/>
    </location>
</feature>
<feature type="active site" evidence="1">
    <location>
        <position position="50"/>
    </location>
</feature>
<feature type="active site" evidence="1">
    <location>
        <position position="122"/>
    </location>
</feature>
<feature type="binding site" evidence="1">
    <location>
        <position position="46"/>
    </location>
    <ligand>
        <name>Mg(2+)</name>
        <dbReference type="ChEBI" id="CHEBI:18420"/>
    </ligand>
</feature>
<feature type="binding site" evidence="1">
    <location>
        <position position="119"/>
    </location>
    <ligand>
        <name>Mg(2+)</name>
        <dbReference type="ChEBI" id="CHEBI:18420"/>
    </ligand>
</feature>
<feature type="binding site" evidence="1">
    <location>
        <position position="122"/>
    </location>
    <ligand>
        <name>Mg(2+)</name>
        <dbReference type="ChEBI" id="CHEBI:18420"/>
    </ligand>
</feature>
<keyword id="KW-0963">Cytoplasm</keyword>
<keyword id="KW-0255">Endonuclease</keyword>
<keyword id="KW-0378">Hydrolase</keyword>
<keyword id="KW-0460">Magnesium</keyword>
<keyword id="KW-0479">Metal-binding</keyword>
<keyword id="KW-0507">mRNA processing</keyword>
<keyword id="KW-0540">Nuclease</keyword>
<keyword id="KW-0694">RNA-binding</keyword>
<keyword id="KW-0698">rRNA processing</keyword>
<keyword id="KW-0699">rRNA-binding</keyword>
<keyword id="KW-0819">tRNA processing</keyword>
<evidence type="ECO:0000255" key="1">
    <source>
        <dbReference type="HAMAP-Rule" id="MF_00104"/>
    </source>
</evidence>
<protein>
    <recommendedName>
        <fullName evidence="1">Ribonuclease 3</fullName>
        <ecNumber evidence="1">3.1.26.3</ecNumber>
    </recommendedName>
    <alternativeName>
        <fullName evidence="1">Ribonuclease III</fullName>
        <shortName evidence="1">RNase III</shortName>
    </alternativeName>
</protein>
<accession>A6LSM2</accession>
<sequence>MNRYTLKEIEENLGVFFNNHTLLKTALTHSSFGNQFKDAEYNERLEFLGDSVLQLCITEYLFNNYKHKTEGELTKIRSLIVCENSLYEIAKKINLGSYIRMSKGEEITGGRERISIQADAVEAIIAAVYLDKGIGFVRDFILLHFEEIINKAINNEIVLDFKTKLQELLQKDGEVVIQYELTKFEGPPHRRKFFTNVVIDKKLMGEGSGYSKKEAEQNAAKQALDILEGKHE</sequence>
<organism>
    <name type="scientific">Clostridium beijerinckii (strain ATCC 51743 / NCIMB 8052)</name>
    <name type="common">Clostridium acetobutylicum</name>
    <dbReference type="NCBI Taxonomy" id="290402"/>
    <lineage>
        <taxon>Bacteria</taxon>
        <taxon>Bacillati</taxon>
        <taxon>Bacillota</taxon>
        <taxon>Clostridia</taxon>
        <taxon>Eubacteriales</taxon>
        <taxon>Clostridiaceae</taxon>
        <taxon>Clostridium</taxon>
    </lineage>
</organism>
<gene>
    <name evidence="1" type="primary">rnc</name>
    <name type="ordered locus">Cbei_1170</name>
</gene>
<dbReference type="EC" id="3.1.26.3" evidence="1"/>
<dbReference type="EMBL" id="CP000721">
    <property type="protein sequence ID" value="ABR33352.1"/>
    <property type="molecule type" value="Genomic_DNA"/>
</dbReference>
<dbReference type="RefSeq" id="WP_011968508.1">
    <property type="nucleotide sequence ID" value="NC_009617.1"/>
</dbReference>
<dbReference type="SMR" id="A6LSM2"/>
<dbReference type="GeneID" id="66344158"/>
<dbReference type="KEGG" id="cbe:Cbei_1170"/>
<dbReference type="eggNOG" id="COG0571">
    <property type="taxonomic scope" value="Bacteria"/>
</dbReference>
<dbReference type="HOGENOM" id="CLU_000907_1_3_9"/>
<dbReference type="Proteomes" id="UP000000565">
    <property type="component" value="Chromosome"/>
</dbReference>
<dbReference type="GO" id="GO:0005737">
    <property type="term" value="C:cytoplasm"/>
    <property type="evidence" value="ECO:0007669"/>
    <property type="project" value="UniProtKB-SubCell"/>
</dbReference>
<dbReference type="GO" id="GO:0003725">
    <property type="term" value="F:double-stranded RNA binding"/>
    <property type="evidence" value="ECO:0007669"/>
    <property type="project" value="TreeGrafter"/>
</dbReference>
<dbReference type="GO" id="GO:0046872">
    <property type="term" value="F:metal ion binding"/>
    <property type="evidence" value="ECO:0007669"/>
    <property type="project" value="UniProtKB-KW"/>
</dbReference>
<dbReference type="GO" id="GO:0004525">
    <property type="term" value="F:ribonuclease III activity"/>
    <property type="evidence" value="ECO:0007669"/>
    <property type="project" value="UniProtKB-UniRule"/>
</dbReference>
<dbReference type="GO" id="GO:0019843">
    <property type="term" value="F:rRNA binding"/>
    <property type="evidence" value="ECO:0007669"/>
    <property type="project" value="UniProtKB-KW"/>
</dbReference>
<dbReference type="GO" id="GO:0006397">
    <property type="term" value="P:mRNA processing"/>
    <property type="evidence" value="ECO:0007669"/>
    <property type="project" value="UniProtKB-UniRule"/>
</dbReference>
<dbReference type="GO" id="GO:0010468">
    <property type="term" value="P:regulation of gene expression"/>
    <property type="evidence" value="ECO:0007669"/>
    <property type="project" value="TreeGrafter"/>
</dbReference>
<dbReference type="GO" id="GO:0006364">
    <property type="term" value="P:rRNA processing"/>
    <property type="evidence" value="ECO:0007669"/>
    <property type="project" value="UniProtKB-UniRule"/>
</dbReference>
<dbReference type="GO" id="GO:0008033">
    <property type="term" value="P:tRNA processing"/>
    <property type="evidence" value="ECO:0007669"/>
    <property type="project" value="UniProtKB-KW"/>
</dbReference>
<dbReference type="CDD" id="cd10845">
    <property type="entry name" value="DSRM_RNAse_III_family"/>
    <property type="match status" value="1"/>
</dbReference>
<dbReference type="CDD" id="cd00593">
    <property type="entry name" value="RIBOc"/>
    <property type="match status" value="1"/>
</dbReference>
<dbReference type="FunFam" id="1.10.1520.10:FF:000001">
    <property type="entry name" value="Ribonuclease 3"/>
    <property type="match status" value="1"/>
</dbReference>
<dbReference type="FunFam" id="3.30.160.20:FF:000003">
    <property type="entry name" value="Ribonuclease 3"/>
    <property type="match status" value="1"/>
</dbReference>
<dbReference type="Gene3D" id="3.30.160.20">
    <property type="match status" value="1"/>
</dbReference>
<dbReference type="Gene3D" id="1.10.1520.10">
    <property type="entry name" value="Ribonuclease III domain"/>
    <property type="match status" value="1"/>
</dbReference>
<dbReference type="HAMAP" id="MF_00104">
    <property type="entry name" value="RNase_III"/>
    <property type="match status" value="1"/>
</dbReference>
<dbReference type="InterPro" id="IPR014720">
    <property type="entry name" value="dsRBD_dom"/>
</dbReference>
<dbReference type="InterPro" id="IPR011907">
    <property type="entry name" value="RNase_III"/>
</dbReference>
<dbReference type="InterPro" id="IPR000999">
    <property type="entry name" value="RNase_III_dom"/>
</dbReference>
<dbReference type="InterPro" id="IPR036389">
    <property type="entry name" value="RNase_III_sf"/>
</dbReference>
<dbReference type="NCBIfam" id="TIGR02191">
    <property type="entry name" value="RNaseIII"/>
    <property type="match status" value="1"/>
</dbReference>
<dbReference type="PANTHER" id="PTHR11207:SF0">
    <property type="entry name" value="RIBONUCLEASE 3"/>
    <property type="match status" value="1"/>
</dbReference>
<dbReference type="PANTHER" id="PTHR11207">
    <property type="entry name" value="RIBONUCLEASE III"/>
    <property type="match status" value="1"/>
</dbReference>
<dbReference type="Pfam" id="PF00035">
    <property type="entry name" value="dsrm"/>
    <property type="match status" value="1"/>
</dbReference>
<dbReference type="Pfam" id="PF14622">
    <property type="entry name" value="Ribonucleas_3_3"/>
    <property type="match status" value="1"/>
</dbReference>
<dbReference type="SMART" id="SM00358">
    <property type="entry name" value="DSRM"/>
    <property type="match status" value="1"/>
</dbReference>
<dbReference type="SMART" id="SM00535">
    <property type="entry name" value="RIBOc"/>
    <property type="match status" value="1"/>
</dbReference>
<dbReference type="SUPFAM" id="SSF54768">
    <property type="entry name" value="dsRNA-binding domain-like"/>
    <property type="match status" value="1"/>
</dbReference>
<dbReference type="SUPFAM" id="SSF69065">
    <property type="entry name" value="RNase III domain-like"/>
    <property type="match status" value="1"/>
</dbReference>
<dbReference type="PROSITE" id="PS50137">
    <property type="entry name" value="DS_RBD"/>
    <property type="match status" value="1"/>
</dbReference>
<dbReference type="PROSITE" id="PS00517">
    <property type="entry name" value="RNASE_3_1"/>
    <property type="match status" value="1"/>
</dbReference>
<dbReference type="PROSITE" id="PS50142">
    <property type="entry name" value="RNASE_3_2"/>
    <property type="match status" value="1"/>
</dbReference>
<reference key="1">
    <citation type="submission" date="2007-06" db="EMBL/GenBank/DDBJ databases">
        <title>Complete sequence of Clostridium beijerinckii NCIMB 8052.</title>
        <authorList>
            <consortium name="US DOE Joint Genome Institute"/>
            <person name="Copeland A."/>
            <person name="Lucas S."/>
            <person name="Lapidus A."/>
            <person name="Barry K."/>
            <person name="Detter J.C."/>
            <person name="Glavina del Rio T."/>
            <person name="Hammon N."/>
            <person name="Israni S."/>
            <person name="Dalin E."/>
            <person name="Tice H."/>
            <person name="Pitluck S."/>
            <person name="Sims D."/>
            <person name="Brettin T."/>
            <person name="Bruce D."/>
            <person name="Tapia R."/>
            <person name="Brainard J."/>
            <person name="Schmutz J."/>
            <person name="Larimer F."/>
            <person name="Land M."/>
            <person name="Hauser L."/>
            <person name="Kyrpides N."/>
            <person name="Mikhailova N."/>
            <person name="Bennet G."/>
            <person name="Cann I."/>
            <person name="Chen J.-S."/>
            <person name="Contreras A.L."/>
            <person name="Jones D."/>
            <person name="Kashket E."/>
            <person name="Mitchell W."/>
            <person name="Stoddard S."/>
            <person name="Schwarz W."/>
            <person name="Qureshi N."/>
            <person name="Young M."/>
            <person name="Shi Z."/>
            <person name="Ezeji T."/>
            <person name="White B."/>
            <person name="Blaschek H."/>
            <person name="Richardson P."/>
        </authorList>
    </citation>
    <scope>NUCLEOTIDE SEQUENCE [LARGE SCALE GENOMIC DNA]</scope>
    <source>
        <strain>ATCC 51743 / NCIMB 8052</strain>
    </source>
</reference>
<comment type="function">
    <text evidence="1">Digests double-stranded RNA. Involved in the processing of primary rRNA transcript to yield the immediate precursors to the large and small rRNAs (23S and 16S). Processes some mRNAs, and tRNAs when they are encoded in the rRNA operon. Processes pre-crRNA and tracrRNA of type II CRISPR loci if present in the organism.</text>
</comment>
<comment type="catalytic activity">
    <reaction evidence="1">
        <text>Endonucleolytic cleavage to 5'-phosphomonoester.</text>
        <dbReference type="EC" id="3.1.26.3"/>
    </reaction>
</comment>
<comment type="cofactor">
    <cofactor evidence="1">
        <name>Mg(2+)</name>
        <dbReference type="ChEBI" id="CHEBI:18420"/>
    </cofactor>
</comment>
<comment type="subunit">
    <text evidence="1">Homodimer.</text>
</comment>
<comment type="subcellular location">
    <subcellularLocation>
        <location evidence="1">Cytoplasm</location>
    </subcellularLocation>
</comment>
<comment type="similarity">
    <text evidence="1">Belongs to the ribonuclease III family.</text>
</comment>